<proteinExistence type="evidence at transcript level"/>
<comment type="function">
    <text evidence="1">NADPH-dependent reductase which is a central component of the cytosolic iron-sulfur (Fe-S) protein assembly (CIA) machinery. Transfers electrons from NADPH via its FAD and FMN prosthetic groups to the [2Fe-2S] cluster of ciapin1, another key component of the CIA machinery. In turn, this reduced cluster provides electrons for assembly of cytosolic iron-sulfur cluster proteins. It can also reduce the [2Fe-2S] cluster of cisd1 and activate this protein implicated in Fe/S cluster repair.</text>
</comment>
<comment type="catalytic activity">
    <reaction evidence="1">
        <text>2 oxidized [2Fe-2S]-[protein] + NADPH = 2 reduced [2Fe-2S]-[protein] + NADP(+) + H(+)</text>
        <dbReference type="Rhea" id="RHEA:67716"/>
        <dbReference type="Rhea" id="RHEA-COMP:17327"/>
        <dbReference type="Rhea" id="RHEA-COMP:17328"/>
        <dbReference type="ChEBI" id="CHEBI:15378"/>
        <dbReference type="ChEBI" id="CHEBI:33737"/>
        <dbReference type="ChEBI" id="CHEBI:33738"/>
        <dbReference type="ChEBI" id="CHEBI:57783"/>
        <dbReference type="ChEBI" id="CHEBI:58349"/>
    </reaction>
    <physiologicalReaction direction="left-to-right" evidence="1">
        <dbReference type="Rhea" id="RHEA:67717"/>
    </physiologicalReaction>
</comment>
<comment type="cofactor">
    <cofactor evidence="1">
        <name>FAD</name>
        <dbReference type="ChEBI" id="CHEBI:57692"/>
    </cofactor>
</comment>
<comment type="cofactor">
    <cofactor evidence="1">
        <name>FMN</name>
        <dbReference type="ChEBI" id="CHEBI:58210"/>
    </cofactor>
</comment>
<comment type="subunit">
    <text evidence="1">Interacts with ciapin1; as part of the cytosolic iron-sulfur (Fe-S) protein assembly (CIA) machinery.</text>
</comment>
<comment type="subcellular location">
    <subcellularLocation>
        <location evidence="1">Cytoplasm</location>
        <location evidence="1">Perinuclear region</location>
    </subcellularLocation>
    <text evidence="1">Concentrated in perinuclear structure.</text>
</comment>
<comment type="similarity">
    <text evidence="1">Belongs to the NADPH-dependent diflavin oxidoreductase NDOR1 family.</text>
</comment>
<comment type="similarity">
    <text evidence="1">In the N-terminal section; belongs to the flavodoxin family.</text>
</comment>
<comment type="similarity">
    <text evidence="1">In the C-terminal section; belongs to the flavoprotein pyridine nucleotide cytochrome reductase family.</text>
</comment>
<feature type="chain" id="PRO_0000319541" description="NADPH-dependent diflavin oxidoreductase 1">
    <location>
        <begin position="1"/>
        <end position="595"/>
    </location>
</feature>
<feature type="domain" description="Flavodoxin-like" evidence="1">
    <location>
        <begin position="6"/>
        <end position="150"/>
    </location>
</feature>
<feature type="domain" description="FAD-binding FR-type" evidence="1">
    <location>
        <begin position="204"/>
        <end position="444"/>
    </location>
</feature>
<feature type="binding site" evidence="1">
    <location>
        <begin position="12"/>
        <end position="17"/>
    </location>
    <ligand>
        <name>FMN</name>
        <dbReference type="ChEBI" id="CHEBI:58210"/>
    </ligand>
</feature>
<feature type="binding site" evidence="1">
    <location>
        <begin position="59"/>
        <end position="62"/>
    </location>
    <ligand>
        <name>FMN</name>
        <dbReference type="ChEBI" id="CHEBI:58210"/>
    </ligand>
</feature>
<feature type="binding site" evidence="1">
    <location>
        <begin position="97"/>
        <end position="106"/>
    </location>
    <ligand>
        <name>FMN</name>
        <dbReference type="ChEBI" id="CHEBI:58210"/>
    </ligand>
</feature>
<feature type="binding site" evidence="1">
    <location>
        <position position="132"/>
    </location>
    <ligand>
        <name>FMN</name>
        <dbReference type="ChEBI" id="CHEBI:58210"/>
    </ligand>
</feature>
<feature type="binding site" evidence="1">
    <location>
        <position position="348"/>
    </location>
    <ligand>
        <name>FAD</name>
        <dbReference type="ChEBI" id="CHEBI:57692"/>
    </ligand>
</feature>
<feature type="binding site" evidence="1">
    <location>
        <begin position="380"/>
        <end position="383"/>
    </location>
    <ligand>
        <name>FAD</name>
        <dbReference type="ChEBI" id="CHEBI:57692"/>
    </ligand>
</feature>
<feature type="binding site" evidence="1">
    <location>
        <begin position="414"/>
        <end position="417"/>
    </location>
    <ligand>
        <name>FAD</name>
        <dbReference type="ChEBI" id="CHEBI:57692"/>
    </ligand>
</feature>
<feature type="binding site" evidence="1">
    <location>
        <position position="458"/>
    </location>
    <ligand>
        <name>NADP(+)</name>
        <dbReference type="ChEBI" id="CHEBI:58349"/>
    </ligand>
</feature>
<feature type="binding site" evidence="1">
    <location>
        <begin position="513"/>
        <end position="514"/>
    </location>
    <ligand>
        <name>NADP(+)</name>
        <dbReference type="ChEBI" id="CHEBI:58349"/>
    </ligand>
</feature>
<feature type="binding site" evidence="1">
    <location>
        <begin position="519"/>
        <end position="523"/>
    </location>
    <ligand>
        <name>NADP(+)</name>
        <dbReference type="ChEBI" id="CHEBI:58349"/>
    </ligand>
</feature>
<feature type="binding site" evidence="1">
    <location>
        <position position="594"/>
    </location>
    <ligand>
        <name>FAD</name>
        <dbReference type="ChEBI" id="CHEBI:57692"/>
    </ligand>
</feature>
<feature type="sequence conflict" description="In Ref. 1; AAH49440." evidence="2" ref="1">
    <original>V</original>
    <variation>A</variation>
    <location>
        <position position="46"/>
    </location>
</feature>
<feature type="sequence conflict" description="In Ref. 1; AAH49440." evidence="2" ref="1">
    <original>P</original>
    <variation>S</variation>
    <location>
        <position position="203"/>
    </location>
</feature>
<feature type="sequence conflict" description="In Ref. 1; AAH49440." evidence="2" ref="1">
    <original>T</original>
    <variation>I</variation>
    <location>
        <position position="245"/>
    </location>
</feature>
<feature type="sequence conflict" description="In Ref. 1; AAH49440." evidence="2" ref="1">
    <original>R</original>
    <variation>C</variation>
    <location>
        <position position="369"/>
    </location>
</feature>
<dbReference type="EC" id="1.18.1.-" evidence="1"/>
<dbReference type="EMBL" id="BC049440">
    <property type="protein sequence ID" value="AAH49440.1"/>
    <property type="molecule type" value="mRNA"/>
</dbReference>
<dbReference type="EMBL" id="BC057471">
    <property type="protein sequence ID" value="AAH57471.1"/>
    <property type="molecule type" value="mRNA"/>
</dbReference>
<dbReference type="RefSeq" id="NP_956942.1">
    <property type="nucleotide sequence ID" value="NM_200648.1"/>
</dbReference>
<dbReference type="SMR" id="Q6PFP6"/>
<dbReference type="FunCoup" id="Q6PFP6">
    <property type="interactions" value="1862"/>
</dbReference>
<dbReference type="STRING" id="7955.ENSDARP00000156852"/>
<dbReference type="PaxDb" id="7955-ENSDARP00000031709"/>
<dbReference type="GeneID" id="393621"/>
<dbReference type="KEGG" id="dre:393621"/>
<dbReference type="AGR" id="ZFIN:ZDB-GENE-040426-1555"/>
<dbReference type="CTD" id="27158"/>
<dbReference type="ZFIN" id="ZDB-GENE-040426-1555">
    <property type="gene designation" value="ndor1"/>
</dbReference>
<dbReference type="eggNOG" id="KOG1159">
    <property type="taxonomic scope" value="Eukaryota"/>
</dbReference>
<dbReference type="InParanoid" id="Q6PFP6"/>
<dbReference type="OrthoDB" id="1856718at2759"/>
<dbReference type="PhylomeDB" id="Q6PFP6"/>
<dbReference type="PRO" id="PR:Q6PFP6"/>
<dbReference type="Proteomes" id="UP000000437">
    <property type="component" value="Chromosome 5"/>
</dbReference>
<dbReference type="GO" id="GO:0005829">
    <property type="term" value="C:cytosol"/>
    <property type="evidence" value="ECO:0000250"/>
    <property type="project" value="UniProtKB"/>
</dbReference>
<dbReference type="GO" id="GO:0048471">
    <property type="term" value="C:perinuclear region of cytoplasm"/>
    <property type="evidence" value="ECO:0007669"/>
    <property type="project" value="UniProtKB-SubCell"/>
</dbReference>
<dbReference type="GO" id="GO:0009055">
    <property type="term" value="F:electron transfer activity"/>
    <property type="evidence" value="ECO:0000250"/>
    <property type="project" value="UniProtKB"/>
</dbReference>
<dbReference type="GO" id="GO:0050660">
    <property type="term" value="F:flavin adenine dinucleotide binding"/>
    <property type="evidence" value="ECO:0000318"/>
    <property type="project" value="GO_Central"/>
</dbReference>
<dbReference type="GO" id="GO:0010181">
    <property type="term" value="F:FMN binding"/>
    <property type="evidence" value="ECO:0000318"/>
    <property type="project" value="GO_Central"/>
</dbReference>
<dbReference type="GO" id="GO:0050661">
    <property type="term" value="F:NADP binding"/>
    <property type="evidence" value="ECO:0007669"/>
    <property type="project" value="UniProtKB-UniRule"/>
</dbReference>
<dbReference type="GO" id="GO:0003958">
    <property type="term" value="F:NADPH-hemoprotein reductase activity"/>
    <property type="evidence" value="ECO:0007669"/>
    <property type="project" value="InterPro"/>
</dbReference>
<dbReference type="GO" id="GO:0160246">
    <property type="term" value="F:NADPH-iron-sulfur [2Fe-2S] protein oxidoreductase activity"/>
    <property type="evidence" value="ECO:0000250"/>
    <property type="project" value="UniProtKB"/>
</dbReference>
<dbReference type="GO" id="GO:0016491">
    <property type="term" value="F:oxidoreductase activity"/>
    <property type="evidence" value="ECO:0000318"/>
    <property type="project" value="GO_Central"/>
</dbReference>
<dbReference type="GO" id="GO:0016653">
    <property type="term" value="F:oxidoreductase activity, acting on NAD(P)H, heme protein as acceptor"/>
    <property type="evidence" value="ECO:0000250"/>
    <property type="project" value="UniProtKB"/>
</dbReference>
<dbReference type="GO" id="GO:0016226">
    <property type="term" value="P:iron-sulfur cluster assembly"/>
    <property type="evidence" value="ECO:0007669"/>
    <property type="project" value="UniProtKB-UniRule"/>
</dbReference>
<dbReference type="FunFam" id="1.20.990.10:FF:000008">
    <property type="entry name" value="NADPH-dependent diflavin oxidoreductase 1"/>
    <property type="match status" value="1"/>
</dbReference>
<dbReference type="FunFam" id="3.40.50.360:FF:000015">
    <property type="entry name" value="NADPH-dependent diflavin oxidoreductase 1"/>
    <property type="match status" value="1"/>
</dbReference>
<dbReference type="FunFam" id="3.40.50.80:FF:000030">
    <property type="entry name" value="NADPH-dependent diflavin oxidoreductase 1"/>
    <property type="match status" value="1"/>
</dbReference>
<dbReference type="Gene3D" id="3.40.50.360">
    <property type="match status" value="1"/>
</dbReference>
<dbReference type="Gene3D" id="1.20.990.10">
    <property type="entry name" value="NADPH-cytochrome p450 Reductase, Chain A, domain 3"/>
    <property type="match status" value="1"/>
</dbReference>
<dbReference type="Gene3D" id="3.40.50.80">
    <property type="entry name" value="Nucleotide-binding domain of ferredoxin-NADP reductase (FNR) module"/>
    <property type="match status" value="1"/>
</dbReference>
<dbReference type="Gene3D" id="2.40.30.10">
    <property type="entry name" value="Translation factors"/>
    <property type="match status" value="1"/>
</dbReference>
<dbReference type="HAMAP" id="MF_03178">
    <property type="entry name" value="NDOR1"/>
    <property type="match status" value="1"/>
</dbReference>
<dbReference type="InterPro" id="IPR003097">
    <property type="entry name" value="CysJ-like_FAD-binding"/>
</dbReference>
<dbReference type="InterPro" id="IPR017927">
    <property type="entry name" value="FAD-bd_FR_type"/>
</dbReference>
<dbReference type="InterPro" id="IPR001094">
    <property type="entry name" value="Flavdoxin-like"/>
</dbReference>
<dbReference type="InterPro" id="IPR008254">
    <property type="entry name" value="Flavodoxin/NO_synth"/>
</dbReference>
<dbReference type="InterPro" id="IPR001709">
    <property type="entry name" value="Flavoprot_Pyr_Nucl_cyt_Rdtase"/>
</dbReference>
<dbReference type="InterPro" id="IPR029039">
    <property type="entry name" value="Flavoprotein-like_sf"/>
</dbReference>
<dbReference type="InterPro" id="IPR039261">
    <property type="entry name" value="FNR_nucleotide-bd"/>
</dbReference>
<dbReference type="InterPro" id="IPR023173">
    <property type="entry name" value="NADPH_Cyt_P450_Rdtase_alpha"/>
</dbReference>
<dbReference type="InterPro" id="IPR028879">
    <property type="entry name" value="NDOR1"/>
</dbReference>
<dbReference type="InterPro" id="IPR001433">
    <property type="entry name" value="OxRdtase_FAD/NAD-bd"/>
</dbReference>
<dbReference type="InterPro" id="IPR017938">
    <property type="entry name" value="Riboflavin_synthase-like_b-brl"/>
</dbReference>
<dbReference type="PANTHER" id="PTHR19384:SF10">
    <property type="entry name" value="NADPH-DEPENDENT DIFLAVIN OXIDOREDUCTASE 1"/>
    <property type="match status" value="1"/>
</dbReference>
<dbReference type="PANTHER" id="PTHR19384">
    <property type="entry name" value="NITRIC OXIDE SYNTHASE-RELATED"/>
    <property type="match status" value="1"/>
</dbReference>
<dbReference type="Pfam" id="PF00667">
    <property type="entry name" value="FAD_binding_1"/>
    <property type="match status" value="1"/>
</dbReference>
<dbReference type="Pfam" id="PF00258">
    <property type="entry name" value="Flavodoxin_1"/>
    <property type="match status" value="1"/>
</dbReference>
<dbReference type="Pfam" id="PF00175">
    <property type="entry name" value="NAD_binding_1"/>
    <property type="match status" value="1"/>
</dbReference>
<dbReference type="PRINTS" id="PR00369">
    <property type="entry name" value="FLAVODOXIN"/>
</dbReference>
<dbReference type="PRINTS" id="PR00371">
    <property type="entry name" value="FPNCR"/>
</dbReference>
<dbReference type="SUPFAM" id="SSF52343">
    <property type="entry name" value="Ferredoxin reductase-like, C-terminal NADP-linked domain"/>
    <property type="match status" value="1"/>
</dbReference>
<dbReference type="SUPFAM" id="SSF52218">
    <property type="entry name" value="Flavoproteins"/>
    <property type="match status" value="1"/>
</dbReference>
<dbReference type="SUPFAM" id="SSF63380">
    <property type="entry name" value="Riboflavin synthase domain-like"/>
    <property type="match status" value="1"/>
</dbReference>
<dbReference type="PROSITE" id="PS51384">
    <property type="entry name" value="FAD_FR"/>
    <property type="match status" value="1"/>
</dbReference>
<dbReference type="PROSITE" id="PS50902">
    <property type="entry name" value="FLAVODOXIN_LIKE"/>
    <property type="match status" value="1"/>
</dbReference>
<reference key="1">
    <citation type="submission" date="2003-09" db="EMBL/GenBank/DDBJ databases">
        <authorList>
            <consortium name="NIH - Zebrafish Gene Collection (ZGC) project"/>
        </authorList>
    </citation>
    <scope>NUCLEOTIDE SEQUENCE [LARGE SCALE MRNA]</scope>
    <source>
        <tissue>Embryo</tissue>
    </source>
</reference>
<evidence type="ECO:0000255" key="1">
    <source>
        <dbReference type="HAMAP-Rule" id="MF_03178"/>
    </source>
</evidence>
<evidence type="ECO:0000305" key="2"/>
<organism>
    <name type="scientific">Danio rerio</name>
    <name type="common">Zebrafish</name>
    <name type="synonym">Brachydanio rerio</name>
    <dbReference type="NCBI Taxonomy" id="7955"/>
    <lineage>
        <taxon>Eukaryota</taxon>
        <taxon>Metazoa</taxon>
        <taxon>Chordata</taxon>
        <taxon>Craniata</taxon>
        <taxon>Vertebrata</taxon>
        <taxon>Euteleostomi</taxon>
        <taxon>Actinopterygii</taxon>
        <taxon>Neopterygii</taxon>
        <taxon>Teleostei</taxon>
        <taxon>Ostariophysi</taxon>
        <taxon>Cypriniformes</taxon>
        <taxon>Danionidae</taxon>
        <taxon>Danioninae</taxon>
        <taxon>Danio</taxon>
    </lineage>
</organism>
<gene>
    <name evidence="1" type="primary">ndor1</name>
</gene>
<name>NDOR1_DANRE</name>
<keyword id="KW-0963">Cytoplasm</keyword>
<keyword id="KW-0274">FAD</keyword>
<keyword id="KW-0285">Flavoprotein</keyword>
<keyword id="KW-0288">FMN</keyword>
<keyword id="KW-0521">NADP</keyword>
<keyword id="KW-0560">Oxidoreductase</keyword>
<keyword id="KW-1185">Reference proteome</keyword>
<accession>Q6PFP6</accession>
<accession>Q5RL12</accession>
<sequence length="595" mass="66890">MSGHTVLVLYGSQTGTAQDTAERIGRQAQRRRLRVKVEALDTYNVVNLISESLVVFVCATTGQGDPPDNMKKFWRFLFRKSLPADSLSRLDCAVLGLGDSSYPKFNFVAKKLHKRLLQLGANMLLPVGLADDQHDLGPDGVIDPWLLSFWQKTLSLYPPPAGLAPLREEDKLPPRYIFHFLSEVPNKLTEHLQTVDNKSSPTPLRPFPAPLVFNQRVTHTAHFQDVRHIEFDITGSNIEFSAGDTVMMRPCNTSEDVEQLCQLLKLDPESYFTLTPTDSSTEVPARLPQPCSIRFLLEHFLDISAVPRRSFFELLATFATDELEQEKLLEFSSAAGQDTLHSYCNRPRRTALEVLTDFPHTTAELSIGRLLDLFPEIQPRSFSIASSLLEHPNRIQILLAVVKYKTMLVKPRKGLCSSWLASLDPSKGDVYVPLWVKKGSLKFPQDPESPVIMVGPGTGVAPFRSAIQERVAQGKMANVLFFGCRSESKDFYCGSEWQEKVQAGQMILVTAFSRDQEDKVYVQHRVKEQGKLLWDLIAKKNAFFYIAGNAKQMPTSVCDALKAVFQKEGGMSENQAQEMLDGMEKNGRFQSETWS</sequence>
<protein>
    <recommendedName>
        <fullName evidence="1">NADPH-dependent diflavin oxidoreductase 1</fullName>
        <ecNumber evidence="1">1.18.1.-</ecNumber>
    </recommendedName>
    <alternativeName>
        <fullName evidence="1">NADPH-dependent FMN and FAD-containing oxidoreductase</fullName>
    </alternativeName>
</protein>